<name>ROC3_ORYSI</name>
<feature type="chain" id="PRO_0000331739" description="Homeobox-leucine zipper protein ROC3">
    <location>
        <begin position="1"/>
        <end position="882"/>
    </location>
</feature>
<feature type="domain" description="START" evidence="4">
    <location>
        <begin position="340"/>
        <end position="584"/>
    </location>
</feature>
<feature type="DNA-binding region" description="Homeobox" evidence="3">
    <location>
        <begin position="134"/>
        <end position="193"/>
    </location>
</feature>
<feature type="region of interest" description="Disordered" evidence="5">
    <location>
        <begin position="104"/>
        <end position="144"/>
    </location>
</feature>
<feature type="region of interest" description="Disordered" evidence="5">
    <location>
        <begin position="782"/>
        <end position="820"/>
    </location>
</feature>
<feature type="coiled-coil region" evidence="2">
    <location>
        <begin position="200"/>
        <end position="263"/>
    </location>
</feature>
<feature type="compositionally biased region" description="Basic and acidic residues" evidence="5">
    <location>
        <begin position="107"/>
        <end position="119"/>
    </location>
</feature>
<feature type="compositionally biased region" description="Basic residues" evidence="5">
    <location>
        <begin position="133"/>
        <end position="143"/>
    </location>
</feature>
<feature type="compositionally biased region" description="Low complexity" evidence="5">
    <location>
        <begin position="782"/>
        <end position="816"/>
    </location>
</feature>
<reference key="1">
    <citation type="journal article" date="2005" name="PLoS Biol.">
        <title>The genomes of Oryza sativa: a history of duplications.</title>
        <authorList>
            <person name="Yu J."/>
            <person name="Wang J."/>
            <person name="Lin W."/>
            <person name="Li S."/>
            <person name="Li H."/>
            <person name="Zhou J."/>
            <person name="Ni P."/>
            <person name="Dong W."/>
            <person name="Hu S."/>
            <person name="Zeng C."/>
            <person name="Zhang J."/>
            <person name="Zhang Y."/>
            <person name="Li R."/>
            <person name="Xu Z."/>
            <person name="Li S."/>
            <person name="Li X."/>
            <person name="Zheng H."/>
            <person name="Cong L."/>
            <person name="Lin L."/>
            <person name="Yin J."/>
            <person name="Geng J."/>
            <person name="Li G."/>
            <person name="Shi J."/>
            <person name="Liu J."/>
            <person name="Lv H."/>
            <person name="Li J."/>
            <person name="Wang J."/>
            <person name="Deng Y."/>
            <person name="Ran L."/>
            <person name="Shi X."/>
            <person name="Wang X."/>
            <person name="Wu Q."/>
            <person name="Li C."/>
            <person name="Ren X."/>
            <person name="Wang J."/>
            <person name="Wang X."/>
            <person name="Li D."/>
            <person name="Liu D."/>
            <person name="Zhang X."/>
            <person name="Ji Z."/>
            <person name="Zhao W."/>
            <person name="Sun Y."/>
            <person name="Zhang Z."/>
            <person name="Bao J."/>
            <person name="Han Y."/>
            <person name="Dong L."/>
            <person name="Ji J."/>
            <person name="Chen P."/>
            <person name="Wu S."/>
            <person name="Liu J."/>
            <person name="Xiao Y."/>
            <person name="Bu D."/>
            <person name="Tan J."/>
            <person name="Yang L."/>
            <person name="Ye C."/>
            <person name="Zhang J."/>
            <person name="Xu J."/>
            <person name="Zhou Y."/>
            <person name="Yu Y."/>
            <person name="Zhang B."/>
            <person name="Zhuang S."/>
            <person name="Wei H."/>
            <person name="Liu B."/>
            <person name="Lei M."/>
            <person name="Yu H."/>
            <person name="Li Y."/>
            <person name="Xu H."/>
            <person name="Wei S."/>
            <person name="He X."/>
            <person name="Fang L."/>
            <person name="Zhang Z."/>
            <person name="Zhang Y."/>
            <person name="Huang X."/>
            <person name="Su Z."/>
            <person name="Tong W."/>
            <person name="Li J."/>
            <person name="Tong Z."/>
            <person name="Li S."/>
            <person name="Ye J."/>
            <person name="Wang L."/>
            <person name="Fang L."/>
            <person name="Lei T."/>
            <person name="Chen C.-S."/>
            <person name="Chen H.-C."/>
            <person name="Xu Z."/>
            <person name="Li H."/>
            <person name="Huang H."/>
            <person name="Zhang F."/>
            <person name="Xu H."/>
            <person name="Li N."/>
            <person name="Zhao C."/>
            <person name="Li S."/>
            <person name="Dong L."/>
            <person name="Huang Y."/>
            <person name="Li L."/>
            <person name="Xi Y."/>
            <person name="Qi Q."/>
            <person name="Li W."/>
            <person name="Zhang B."/>
            <person name="Hu W."/>
            <person name="Zhang Y."/>
            <person name="Tian X."/>
            <person name="Jiao Y."/>
            <person name="Liang X."/>
            <person name="Jin J."/>
            <person name="Gao L."/>
            <person name="Zheng W."/>
            <person name="Hao B."/>
            <person name="Liu S.-M."/>
            <person name="Wang W."/>
            <person name="Yuan L."/>
            <person name="Cao M."/>
            <person name="McDermott J."/>
            <person name="Samudrala R."/>
            <person name="Wang J."/>
            <person name="Wong G.K.-S."/>
            <person name="Yang H."/>
        </authorList>
    </citation>
    <scope>NUCLEOTIDE SEQUENCE [LARGE SCALE GENOMIC DNA]</scope>
    <source>
        <strain>cv. 93-11</strain>
    </source>
</reference>
<proteinExistence type="inferred from homology"/>
<keyword id="KW-0175">Coiled coil</keyword>
<keyword id="KW-0238">DNA-binding</keyword>
<keyword id="KW-0371">Homeobox</keyword>
<keyword id="KW-0539">Nucleus</keyword>
<keyword id="KW-1185">Reference proteome</keyword>
<keyword id="KW-0804">Transcription</keyword>
<keyword id="KW-0805">Transcription regulation</keyword>
<protein>
    <recommendedName>
        <fullName>Homeobox-leucine zipper protein ROC3</fullName>
    </recommendedName>
    <alternativeName>
        <fullName>GLABR 2-like homeobox protein 3</fullName>
    </alternativeName>
    <alternativeName>
        <fullName>HD-ZIP protein ROC3</fullName>
    </alternativeName>
    <alternativeName>
        <fullName>Homeodomain transcription factor ROC3</fullName>
    </alternativeName>
    <alternativeName>
        <fullName>Protein RICE OUTERMOST CELL-SPECIFIC 3</fullName>
    </alternativeName>
</protein>
<comment type="function">
    <text evidence="1">Probable transcription factor.</text>
</comment>
<comment type="subcellular location">
    <subcellularLocation>
        <location evidence="6">Nucleus</location>
    </subcellularLocation>
</comment>
<comment type="similarity">
    <text evidence="6">Belongs to the HD-ZIP homeobox family. Class IV subfamily.</text>
</comment>
<comment type="sequence caution" evidence="6">
    <conflict type="erroneous initiation">
        <sequence resource="EMBL-CDS" id="EAY79621"/>
    </conflict>
</comment>
<accession>A2ZAI7</accession>
<sequence length="882" mass="94725">MRRMFGDCQVLSSMAAMAGASSSADALFASPLIPNPALAGFMSSSAAMPFHHFSNAAATLIPKEEGLMGGLHVAKDEEMDLEMDMELSGGSGSAHLDGLLSFADVDDDHKPQHSGHDQPPDAAQPSGAAGGNAKKKRYHRHTAHQIQQMEALFKECPHPDDKQRLKLSQELGLKPRQVKFWFQNRRTQMKAQQDRADNVILRAENENLKSDNFRLQAAIRNVVCPNCGHAAVLADMSYEEQQLRIENARLKDELDRLACIATRYGGGGGRQPVLSTSALSCISAPPPVLMPPLDLDMNVYSRHFAEQAPVMGCGDLIPPPVVPQHDGAAAYMGAMMAPVQEQDKQLVVDLAATAADQLARMCRAGEPLWVRQRGAEVMAVEEHARMFSWPVDGAKQGDGGAVARAEGTRDNAVVIMNSINLVDAFLDANKWMELFPSIVCKARTIQIINHGAASGHLGSGTLLLMQAEVQFLSPLVAAREVVFFRYCVHNADEGSWAIVDFPAEGFEEGLLQASVVRCRRRPSGCIIQDMPNGYSRVVWVEHMEMVGEEKPLQPVFRDYVASGAAFGATRWLSILQRQCERLASELARNIADLGVIRTPEARTNMMKLSQRMITTFCANISASGTQSWTALSDSTQDTIRVTTRKNTEPGQPSGVILTAVSTSWLPFTHQQVFELLADEQQRCQLEILSNGGSLHEVAHIANGSHPRNCISLLRINAASNSSQNVELLLQESSTHPDGGSLVVFATVDVDAIQVTMSGEDPSYIPLLPLGFAIFPATSPSPAAAPTISSSTTTTTGNGNGETSSTPPRNSSSNNNNADELLPPNGCLLTVGMQVLASAVPSAKLNLSSVTAINSHVCNAIHQITAALKGSAGGAGGEPASDQ</sequence>
<dbReference type="EMBL" id="CM000135">
    <property type="protein sequence ID" value="EAY79621.1"/>
    <property type="status" value="ALT_INIT"/>
    <property type="molecule type" value="Genomic_DNA"/>
</dbReference>
<dbReference type="SMR" id="A2ZAI7"/>
<dbReference type="STRING" id="39946.A2ZAI7"/>
<dbReference type="EnsemblPlants" id="OsGoSa_10g0021100.01">
    <property type="protein sequence ID" value="OsGoSa_10g0021100.01"/>
    <property type="gene ID" value="OsGoSa_10g0021100"/>
</dbReference>
<dbReference type="EnsemblPlants" id="OsIR64_10g0020800.01">
    <property type="protein sequence ID" value="OsIR64_10g0020800.01"/>
    <property type="gene ID" value="OsIR64_10g0020800"/>
</dbReference>
<dbReference type="EnsemblPlants" id="OsKYG_10g0020530.01">
    <property type="protein sequence ID" value="OsKYG_10g0020530.01"/>
    <property type="gene ID" value="OsKYG_10g0020530"/>
</dbReference>
<dbReference type="EnsemblPlants" id="OsLima_10g0020630.01">
    <property type="protein sequence ID" value="OsLima_10g0020630.01"/>
    <property type="gene ID" value="OsLima_10g0020630"/>
</dbReference>
<dbReference type="EnsemblPlants" id="OsLiXu_10g0020610.01">
    <property type="protein sequence ID" value="OsLiXu_10g0020610.01"/>
    <property type="gene ID" value="OsLiXu_10g0020610"/>
</dbReference>
<dbReference type="EnsemblPlants" id="OsMH63_10G020850_01">
    <property type="protein sequence ID" value="OsMH63_10G020850_01"/>
    <property type="gene ID" value="OsMH63_10G020850"/>
</dbReference>
<dbReference type="EnsemblPlants" id="OsPr106_10g0021070.01">
    <property type="protein sequence ID" value="OsPr106_10g0021070.01"/>
    <property type="gene ID" value="OsPr106_10g0021070"/>
</dbReference>
<dbReference type="Gramene" id="OsGoSa_10g0021100.01">
    <property type="protein sequence ID" value="OsGoSa_10g0021100.01"/>
    <property type="gene ID" value="OsGoSa_10g0021100"/>
</dbReference>
<dbReference type="Gramene" id="OsIR64_10g0020800.01">
    <property type="protein sequence ID" value="OsIR64_10g0020800.01"/>
    <property type="gene ID" value="OsIR64_10g0020800"/>
</dbReference>
<dbReference type="Gramene" id="OsKYG_10g0020530.01">
    <property type="protein sequence ID" value="OsKYG_10g0020530.01"/>
    <property type="gene ID" value="OsKYG_10g0020530"/>
</dbReference>
<dbReference type="Gramene" id="OsLima_10g0020630.01">
    <property type="protein sequence ID" value="OsLima_10g0020630.01"/>
    <property type="gene ID" value="OsLima_10g0020630"/>
</dbReference>
<dbReference type="Gramene" id="OsLiXu_10g0020610.01">
    <property type="protein sequence ID" value="OsLiXu_10g0020610.01"/>
    <property type="gene ID" value="OsLiXu_10g0020610"/>
</dbReference>
<dbReference type="Gramene" id="OsMH63_10G020850_01">
    <property type="protein sequence ID" value="OsMH63_10G020850_01"/>
    <property type="gene ID" value="OsMH63_10G020850"/>
</dbReference>
<dbReference type="Gramene" id="OsPr106_10g0021070.01">
    <property type="protein sequence ID" value="OsPr106_10g0021070.01"/>
    <property type="gene ID" value="OsPr106_10g0021070"/>
</dbReference>
<dbReference type="HOGENOM" id="CLU_015002_2_1_1"/>
<dbReference type="OrthoDB" id="6159439at2759"/>
<dbReference type="Proteomes" id="UP000007015">
    <property type="component" value="Chromosome 10"/>
</dbReference>
<dbReference type="GO" id="GO:0005634">
    <property type="term" value="C:nucleus"/>
    <property type="evidence" value="ECO:0007669"/>
    <property type="project" value="UniProtKB-SubCell"/>
</dbReference>
<dbReference type="GO" id="GO:0003677">
    <property type="term" value="F:DNA binding"/>
    <property type="evidence" value="ECO:0007669"/>
    <property type="project" value="UniProtKB-KW"/>
</dbReference>
<dbReference type="GO" id="GO:0000981">
    <property type="term" value="F:DNA-binding transcription factor activity, RNA polymerase II-specific"/>
    <property type="evidence" value="ECO:0007669"/>
    <property type="project" value="InterPro"/>
</dbReference>
<dbReference type="GO" id="GO:0008289">
    <property type="term" value="F:lipid binding"/>
    <property type="evidence" value="ECO:0007669"/>
    <property type="project" value="InterPro"/>
</dbReference>
<dbReference type="CDD" id="cd00086">
    <property type="entry name" value="homeodomain"/>
    <property type="match status" value="1"/>
</dbReference>
<dbReference type="CDD" id="cd08875">
    <property type="entry name" value="START_ArGLABRA2_like"/>
    <property type="match status" value="1"/>
</dbReference>
<dbReference type="FunFam" id="1.10.10.60:FF:000229">
    <property type="entry name" value="Homeobox-leucine zipper protein HDG1"/>
    <property type="match status" value="1"/>
</dbReference>
<dbReference type="Gene3D" id="3.30.530.20">
    <property type="match status" value="1"/>
</dbReference>
<dbReference type="Gene3D" id="1.10.10.60">
    <property type="entry name" value="Homeodomain-like"/>
    <property type="match status" value="1"/>
</dbReference>
<dbReference type="InterPro" id="IPR042160">
    <property type="entry name" value="GLABRA2/ANL2/PDF2/ATML1-like"/>
</dbReference>
<dbReference type="InterPro" id="IPR001356">
    <property type="entry name" value="HD"/>
</dbReference>
<dbReference type="InterPro" id="IPR017970">
    <property type="entry name" value="Homeobox_CS"/>
</dbReference>
<dbReference type="InterPro" id="IPR009057">
    <property type="entry name" value="Homeodomain-like_sf"/>
</dbReference>
<dbReference type="InterPro" id="IPR023393">
    <property type="entry name" value="START-like_dom_sf"/>
</dbReference>
<dbReference type="InterPro" id="IPR002913">
    <property type="entry name" value="START_lipid-bd_dom"/>
</dbReference>
<dbReference type="PANTHER" id="PTHR45654:SF11">
    <property type="entry name" value="HOMEOBOX-LEUCINE ZIPPER PROTEIN HDG5"/>
    <property type="match status" value="1"/>
</dbReference>
<dbReference type="PANTHER" id="PTHR45654">
    <property type="entry name" value="HOMEOBOX-LEUCINE ZIPPER PROTEIN MERISTEM L1"/>
    <property type="match status" value="1"/>
</dbReference>
<dbReference type="Pfam" id="PF00046">
    <property type="entry name" value="Homeodomain"/>
    <property type="match status" value="1"/>
</dbReference>
<dbReference type="Pfam" id="PF01852">
    <property type="entry name" value="START"/>
    <property type="match status" value="1"/>
</dbReference>
<dbReference type="SMART" id="SM00389">
    <property type="entry name" value="HOX"/>
    <property type="match status" value="1"/>
</dbReference>
<dbReference type="SMART" id="SM00234">
    <property type="entry name" value="START"/>
    <property type="match status" value="1"/>
</dbReference>
<dbReference type="SUPFAM" id="SSF55961">
    <property type="entry name" value="Bet v1-like"/>
    <property type="match status" value="2"/>
</dbReference>
<dbReference type="SUPFAM" id="SSF46689">
    <property type="entry name" value="Homeodomain-like"/>
    <property type="match status" value="1"/>
</dbReference>
<dbReference type="PROSITE" id="PS00027">
    <property type="entry name" value="HOMEOBOX_1"/>
    <property type="match status" value="1"/>
</dbReference>
<dbReference type="PROSITE" id="PS50071">
    <property type="entry name" value="HOMEOBOX_2"/>
    <property type="match status" value="1"/>
</dbReference>
<dbReference type="PROSITE" id="PS50848">
    <property type="entry name" value="START"/>
    <property type="match status" value="1"/>
</dbReference>
<gene>
    <name type="primary">ROC3</name>
    <name type="synonym">GL2-1</name>
    <name type="ORF">OsI_033580</name>
</gene>
<organism>
    <name type="scientific">Oryza sativa subsp. indica</name>
    <name type="common">Rice</name>
    <dbReference type="NCBI Taxonomy" id="39946"/>
    <lineage>
        <taxon>Eukaryota</taxon>
        <taxon>Viridiplantae</taxon>
        <taxon>Streptophyta</taxon>
        <taxon>Embryophyta</taxon>
        <taxon>Tracheophyta</taxon>
        <taxon>Spermatophyta</taxon>
        <taxon>Magnoliopsida</taxon>
        <taxon>Liliopsida</taxon>
        <taxon>Poales</taxon>
        <taxon>Poaceae</taxon>
        <taxon>BOP clade</taxon>
        <taxon>Oryzoideae</taxon>
        <taxon>Oryzeae</taxon>
        <taxon>Oryzinae</taxon>
        <taxon>Oryza</taxon>
        <taxon>Oryza sativa</taxon>
    </lineage>
</organism>
<evidence type="ECO:0000250" key="1"/>
<evidence type="ECO:0000255" key="2"/>
<evidence type="ECO:0000255" key="3">
    <source>
        <dbReference type="PROSITE-ProRule" id="PRU00108"/>
    </source>
</evidence>
<evidence type="ECO:0000255" key="4">
    <source>
        <dbReference type="PROSITE-ProRule" id="PRU00197"/>
    </source>
</evidence>
<evidence type="ECO:0000256" key="5">
    <source>
        <dbReference type="SAM" id="MobiDB-lite"/>
    </source>
</evidence>
<evidence type="ECO:0000305" key="6"/>